<reference key="1">
    <citation type="submission" date="2006-06" db="EMBL/GenBank/DDBJ databases">
        <title>Complete sequence of chromosome of Mesorhizobium sp. BNC1.</title>
        <authorList>
            <consortium name="US DOE Joint Genome Institute"/>
            <person name="Copeland A."/>
            <person name="Lucas S."/>
            <person name="Lapidus A."/>
            <person name="Barry K."/>
            <person name="Detter J.C."/>
            <person name="Glavina del Rio T."/>
            <person name="Hammon N."/>
            <person name="Israni S."/>
            <person name="Dalin E."/>
            <person name="Tice H."/>
            <person name="Pitluck S."/>
            <person name="Chertkov O."/>
            <person name="Brettin T."/>
            <person name="Bruce D."/>
            <person name="Han C."/>
            <person name="Tapia R."/>
            <person name="Gilna P."/>
            <person name="Schmutz J."/>
            <person name="Larimer F."/>
            <person name="Land M."/>
            <person name="Hauser L."/>
            <person name="Kyrpides N."/>
            <person name="Mikhailova N."/>
            <person name="Richardson P."/>
        </authorList>
    </citation>
    <scope>NUCLEOTIDE SEQUENCE [LARGE SCALE GENOMIC DNA]</scope>
    <source>
        <strain>BNC1</strain>
    </source>
</reference>
<name>HMUV_CHESB</name>
<keyword id="KW-0067">ATP-binding</keyword>
<keyword id="KW-0997">Cell inner membrane</keyword>
<keyword id="KW-1003">Cell membrane</keyword>
<keyword id="KW-0472">Membrane</keyword>
<keyword id="KW-0547">Nucleotide-binding</keyword>
<keyword id="KW-1278">Translocase</keyword>
<keyword id="KW-0813">Transport</keyword>
<protein>
    <recommendedName>
        <fullName evidence="1">Hemin import ATP-binding protein HmuV</fullName>
        <ecNumber evidence="1">7.6.2.-</ecNumber>
    </recommendedName>
</protein>
<sequence length="259" mass="27647">MIEARDLNVSIGGKRILSHVNFAAEPGIVTAIVGPNGSGKSTLIKTISGDLPYGGSITLNGQELARMKPAEAAMVRAVLPQSTTLSFPCTVREVVSLGIMRGYSAARDNCLPERALEKVDLAGFAGRFYQELSGGEQQRVQLARVLCQVWTPCLGQPRYLLLDEPVSSLDIKHQLIVLRIAREFAAAGGGVVAVLHDLNLTVAFAHHVVIMHQGRSVAGGTPEEVMQDALLSEVFDCQLKVGALPDGPTPFLLPQTAMV</sequence>
<proteinExistence type="inferred from homology"/>
<feature type="chain" id="PRO_0000269600" description="Hemin import ATP-binding protein HmuV">
    <location>
        <begin position="1"/>
        <end position="259"/>
    </location>
</feature>
<feature type="domain" description="ABC transporter" evidence="1">
    <location>
        <begin position="2"/>
        <end position="238"/>
    </location>
</feature>
<feature type="binding site" evidence="1">
    <location>
        <begin position="34"/>
        <end position="41"/>
    </location>
    <ligand>
        <name>ATP</name>
        <dbReference type="ChEBI" id="CHEBI:30616"/>
    </ligand>
</feature>
<gene>
    <name evidence="1" type="primary">hmuV</name>
    <name type="ordered locus">Meso_1444</name>
</gene>
<accession>Q11ID5</accession>
<evidence type="ECO:0000255" key="1">
    <source>
        <dbReference type="HAMAP-Rule" id="MF_01718"/>
    </source>
</evidence>
<evidence type="ECO:0000305" key="2"/>
<dbReference type="EC" id="7.6.2.-" evidence="1"/>
<dbReference type="EMBL" id="CP000390">
    <property type="protein sequence ID" value="ABG62840.1"/>
    <property type="status" value="ALT_INIT"/>
    <property type="molecule type" value="Genomic_DNA"/>
</dbReference>
<dbReference type="SMR" id="Q11ID5"/>
<dbReference type="STRING" id="266779.Meso_1444"/>
<dbReference type="KEGG" id="mes:Meso_1444"/>
<dbReference type="eggNOG" id="COG4559">
    <property type="taxonomic scope" value="Bacteria"/>
</dbReference>
<dbReference type="HOGENOM" id="CLU_000604_1_11_5"/>
<dbReference type="OrthoDB" id="9810077at2"/>
<dbReference type="GO" id="GO:0005886">
    <property type="term" value="C:plasma membrane"/>
    <property type="evidence" value="ECO:0007669"/>
    <property type="project" value="UniProtKB-SubCell"/>
</dbReference>
<dbReference type="GO" id="GO:0005524">
    <property type="term" value="F:ATP binding"/>
    <property type="evidence" value="ECO:0007669"/>
    <property type="project" value="UniProtKB-KW"/>
</dbReference>
<dbReference type="GO" id="GO:0016887">
    <property type="term" value="F:ATP hydrolysis activity"/>
    <property type="evidence" value="ECO:0007669"/>
    <property type="project" value="InterPro"/>
</dbReference>
<dbReference type="CDD" id="cd03214">
    <property type="entry name" value="ABC_Iron-Siderophores_B12_Hemin"/>
    <property type="match status" value="1"/>
</dbReference>
<dbReference type="Gene3D" id="3.40.50.300">
    <property type="entry name" value="P-loop containing nucleotide triphosphate hydrolases"/>
    <property type="match status" value="1"/>
</dbReference>
<dbReference type="InterPro" id="IPR003593">
    <property type="entry name" value="AAA+_ATPase"/>
</dbReference>
<dbReference type="InterPro" id="IPR003439">
    <property type="entry name" value="ABC_transporter-like_ATP-bd"/>
</dbReference>
<dbReference type="InterPro" id="IPR017871">
    <property type="entry name" value="ABC_transporter-like_CS"/>
</dbReference>
<dbReference type="InterPro" id="IPR027417">
    <property type="entry name" value="P-loop_NTPase"/>
</dbReference>
<dbReference type="NCBIfam" id="NF010068">
    <property type="entry name" value="PRK13548.1"/>
    <property type="match status" value="1"/>
</dbReference>
<dbReference type="PANTHER" id="PTHR42794">
    <property type="entry name" value="HEMIN IMPORT ATP-BINDING PROTEIN HMUV"/>
    <property type="match status" value="1"/>
</dbReference>
<dbReference type="PANTHER" id="PTHR42794:SF1">
    <property type="entry name" value="HEMIN IMPORT ATP-BINDING PROTEIN HMUV"/>
    <property type="match status" value="1"/>
</dbReference>
<dbReference type="Pfam" id="PF00005">
    <property type="entry name" value="ABC_tran"/>
    <property type="match status" value="1"/>
</dbReference>
<dbReference type="SMART" id="SM00382">
    <property type="entry name" value="AAA"/>
    <property type="match status" value="1"/>
</dbReference>
<dbReference type="SUPFAM" id="SSF52540">
    <property type="entry name" value="P-loop containing nucleoside triphosphate hydrolases"/>
    <property type="match status" value="1"/>
</dbReference>
<dbReference type="PROSITE" id="PS00211">
    <property type="entry name" value="ABC_TRANSPORTER_1"/>
    <property type="match status" value="1"/>
</dbReference>
<dbReference type="PROSITE" id="PS50893">
    <property type="entry name" value="ABC_TRANSPORTER_2"/>
    <property type="match status" value="1"/>
</dbReference>
<dbReference type="PROSITE" id="PS51261">
    <property type="entry name" value="HMUV"/>
    <property type="match status" value="1"/>
</dbReference>
<organism>
    <name type="scientific">Chelativorans sp. (strain BNC1)</name>
    <dbReference type="NCBI Taxonomy" id="266779"/>
    <lineage>
        <taxon>Bacteria</taxon>
        <taxon>Pseudomonadati</taxon>
        <taxon>Pseudomonadota</taxon>
        <taxon>Alphaproteobacteria</taxon>
        <taxon>Hyphomicrobiales</taxon>
        <taxon>Phyllobacteriaceae</taxon>
        <taxon>Chelativorans</taxon>
    </lineage>
</organism>
<comment type="function">
    <text evidence="1">Part of the ABC transporter complex HmuTUV involved in hemin import. Responsible for energy coupling to the transport system.</text>
</comment>
<comment type="subunit">
    <text evidence="1">The complex is composed of two ATP-binding proteins (HmuV), two transmembrane proteins (HmuU) and a solute-binding protein (HmuT).</text>
</comment>
<comment type="subcellular location">
    <subcellularLocation>
        <location evidence="1">Cell inner membrane</location>
        <topology evidence="1">Peripheral membrane protein</topology>
    </subcellularLocation>
</comment>
<comment type="similarity">
    <text evidence="1">Belongs to the ABC transporter superfamily. Heme (hemin) importer (TC 3.A.1.14.5) family.</text>
</comment>
<comment type="sequence caution" evidence="2">
    <conflict type="erroneous initiation">
        <sequence resource="EMBL-CDS" id="ABG62840"/>
    </conflict>
</comment>